<proteinExistence type="inferred from homology"/>
<keyword id="KW-0963">Cytoplasm</keyword>
<keyword id="KW-1185">Reference proteome</keyword>
<keyword id="KW-0690">Ribosome biogenesis</keyword>
<sequence length="116" mass="13227">MKHMSNVKIERYESIIKDLISHAITTLVYDDLIKQATVHYVTLSKDKSIAKVYISCYDKTIIDKILKKINGASGFFRTILAKNLNLRKAPAIVFLNDESIDKIDEINSLLEQIKGK</sequence>
<dbReference type="EMBL" id="BA000026">
    <property type="protein sequence ID" value="BAC43904.1"/>
    <property type="molecule type" value="Genomic_DNA"/>
</dbReference>
<dbReference type="SMR" id="Q8EWT9"/>
<dbReference type="FunCoup" id="Q8EWT9">
    <property type="interactions" value="197"/>
</dbReference>
<dbReference type="STRING" id="272633.gene:10731205"/>
<dbReference type="KEGG" id="mpe:MYPE1120"/>
<dbReference type="eggNOG" id="COG0858">
    <property type="taxonomic scope" value="Bacteria"/>
</dbReference>
<dbReference type="HOGENOM" id="CLU_089475_6_5_14"/>
<dbReference type="InParanoid" id="Q8EWT9"/>
<dbReference type="Proteomes" id="UP000002522">
    <property type="component" value="Chromosome"/>
</dbReference>
<dbReference type="GO" id="GO:0005829">
    <property type="term" value="C:cytosol"/>
    <property type="evidence" value="ECO:0007669"/>
    <property type="project" value="TreeGrafter"/>
</dbReference>
<dbReference type="GO" id="GO:0043024">
    <property type="term" value="F:ribosomal small subunit binding"/>
    <property type="evidence" value="ECO:0007669"/>
    <property type="project" value="TreeGrafter"/>
</dbReference>
<dbReference type="GO" id="GO:0030490">
    <property type="term" value="P:maturation of SSU-rRNA"/>
    <property type="evidence" value="ECO:0007669"/>
    <property type="project" value="UniProtKB-UniRule"/>
</dbReference>
<dbReference type="Gene3D" id="3.30.300.20">
    <property type="match status" value="1"/>
</dbReference>
<dbReference type="HAMAP" id="MF_00003">
    <property type="entry name" value="RbfA"/>
    <property type="match status" value="1"/>
</dbReference>
<dbReference type="InterPro" id="IPR015946">
    <property type="entry name" value="KH_dom-like_a/b"/>
</dbReference>
<dbReference type="InterPro" id="IPR000238">
    <property type="entry name" value="RbfA"/>
</dbReference>
<dbReference type="InterPro" id="IPR023799">
    <property type="entry name" value="RbfA_dom_sf"/>
</dbReference>
<dbReference type="InterPro" id="IPR020053">
    <property type="entry name" value="Ribosome-bd_factorA_CS"/>
</dbReference>
<dbReference type="NCBIfam" id="TIGR00082">
    <property type="entry name" value="rbfA"/>
    <property type="match status" value="1"/>
</dbReference>
<dbReference type="PANTHER" id="PTHR33515">
    <property type="entry name" value="RIBOSOME-BINDING FACTOR A, CHLOROPLASTIC-RELATED"/>
    <property type="match status" value="1"/>
</dbReference>
<dbReference type="PANTHER" id="PTHR33515:SF1">
    <property type="entry name" value="RIBOSOME-BINDING FACTOR A, CHLOROPLASTIC-RELATED"/>
    <property type="match status" value="1"/>
</dbReference>
<dbReference type="Pfam" id="PF02033">
    <property type="entry name" value="RBFA"/>
    <property type="match status" value="1"/>
</dbReference>
<dbReference type="SUPFAM" id="SSF89919">
    <property type="entry name" value="Ribosome-binding factor A, RbfA"/>
    <property type="match status" value="1"/>
</dbReference>
<dbReference type="PROSITE" id="PS01319">
    <property type="entry name" value="RBFA"/>
    <property type="match status" value="1"/>
</dbReference>
<organism>
    <name type="scientific">Malacoplasma penetrans (strain HF-2)</name>
    <name type="common">Mycoplasma penetrans</name>
    <dbReference type="NCBI Taxonomy" id="272633"/>
    <lineage>
        <taxon>Bacteria</taxon>
        <taxon>Bacillati</taxon>
        <taxon>Mycoplasmatota</taxon>
        <taxon>Mycoplasmoidales</taxon>
        <taxon>Mycoplasmoidaceae</taxon>
        <taxon>Malacoplasma</taxon>
    </lineage>
</organism>
<name>RBFA_MALP2</name>
<evidence type="ECO:0000255" key="1">
    <source>
        <dbReference type="HAMAP-Rule" id="MF_00003"/>
    </source>
</evidence>
<accession>Q8EWT9</accession>
<feature type="chain" id="PRO_0000102694" description="Ribosome-binding factor A">
    <location>
        <begin position="1"/>
        <end position="116"/>
    </location>
</feature>
<reference key="1">
    <citation type="journal article" date="2002" name="Nucleic Acids Res.">
        <title>The complete genomic sequence of Mycoplasma penetrans, an intracellular bacterial pathogen in humans.</title>
        <authorList>
            <person name="Sasaki Y."/>
            <person name="Ishikawa J."/>
            <person name="Yamashita A."/>
            <person name="Oshima K."/>
            <person name="Kenri T."/>
            <person name="Furuya K."/>
            <person name="Yoshino C."/>
            <person name="Horino A."/>
            <person name="Shiba T."/>
            <person name="Sasaki T."/>
            <person name="Hattori M."/>
        </authorList>
    </citation>
    <scope>NUCLEOTIDE SEQUENCE [LARGE SCALE GENOMIC DNA]</scope>
    <source>
        <strain>HF-2</strain>
    </source>
</reference>
<comment type="function">
    <text evidence="1">One of several proteins that assist in the late maturation steps of the functional core of the 30S ribosomal subunit. Associates with free 30S ribosomal subunits (but not with 30S subunits that are part of 70S ribosomes or polysomes). Required for efficient processing of 16S rRNA. May interact with the 5'-terminal helix region of 16S rRNA.</text>
</comment>
<comment type="subunit">
    <text evidence="1">Monomer. Binds 30S ribosomal subunits, but not 50S ribosomal subunits or 70S ribosomes.</text>
</comment>
<comment type="subcellular location">
    <subcellularLocation>
        <location evidence="1">Cytoplasm</location>
    </subcellularLocation>
</comment>
<comment type="similarity">
    <text evidence="1">Belongs to the RbfA family.</text>
</comment>
<gene>
    <name evidence="1" type="primary">rbfA</name>
    <name type="ordered locus">MYPE1120</name>
</gene>
<protein>
    <recommendedName>
        <fullName evidence="1">Ribosome-binding factor A</fullName>
    </recommendedName>
</protein>